<name>SKA1_MAIZE</name>
<evidence type="ECO:0000255" key="1"/>
<evidence type="ECO:0000305" key="2"/>
<proteinExistence type="evidence at transcript level"/>
<sequence length="273" mass="30375">MEVDDGSRATPPLDAVAAAFKSQVMELQDLVLARSMFPATALPDLANVDALVTAMESQVETISRRLQEELDAIPKAKKLVQRSLKEEEKLQHMLANLPSGMRKNDFANQHEQSSSRMLPHFNSSFTEANECELKIKDEPVAAPRKGRAPAPRWYISTEELDSLSSYMRGRLTLEKVNIAINEVASYADANAHLVTCPKKKLSEDTWEKALELRDIAASGAVKGNHFFLEADIKGPGLKLDNTGKAILTVLRHLGRFHEVRIGHHRVFILSKQA</sequence>
<reference key="1">
    <citation type="submission" date="2008-07" db="EMBL/GenBank/DDBJ databases">
        <title>Maize full-length cDNA project.</title>
        <authorList>
            <person name="Yu Y."/>
            <person name="Currie J."/>
            <person name="Lomeli R."/>
            <person name="Angelova A."/>
            <person name="Collura K."/>
            <person name="Wissotski M."/>
            <person name="Campos D."/>
            <person name="Kudrna D."/>
            <person name="Golser W."/>
            <person name="Ashely E."/>
            <person name="Haller K."/>
            <person name="Descour A."/>
            <person name="Fernandes J."/>
            <person name="Zuccolo A."/>
            <person name="Soderlund C."/>
            <person name="Walbot V."/>
        </authorList>
    </citation>
    <scope>NUCLEOTIDE SEQUENCE [MRNA]</scope>
    <source>
        <strain>cv. B73</strain>
    </source>
</reference>
<reference key="2">
    <citation type="journal article" date="2009" name="Plant Mol. Biol.">
        <title>Insights into corn genes derived from large-scale cDNA sequencing.</title>
        <authorList>
            <person name="Alexandrov N.N."/>
            <person name="Brover V.V."/>
            <person name="Freidin S."/>
            <person name="Troukhan M.E."/>
            <person name="Tatarinova T.V."/>
            <person name="Zhang H."/>
            <person name="Swaller T.J."/>
            <person name="Lu Y.-P."/>
            <person name="Bouck J."/>
            <person name="Flavell R.B."/>
            <person name="Feldmann K.A."/>
        </authorList>
    </citation>
    <scope>NUCLEOTIDE SEQUENCE [LARGE SCALE MRNA]</scope>
</reference>
<comment type="similarity">
    <text evidence="2">Belongs to the SKA1 family.</text>
</comment>
<dbReference type="EMBL" id="BT036310">
    <property type="protein sequence ID" value="ACF81315.1"/>
    <property type="molecule type" value="mRNA"/>
</dbReference>
<dbReference type="EMBL" id="EU969508">
    <property type="protein sequence ID" value="ACG41626.1"/>
    <property type="molecule type" value="mRNA"/>
</dbReference>
<dbReference type="RefSeq" id="NP_001132466.1">
    <property type="nucleotide sequence ID" value="NM_001138994.2"/>
</dbReference>
<dbReference type="SMR" id="B4FGS2"/>
<dbReference type="FunCoup" id="B4FGS2">
    <property type="interactions" value="69"/>
</dbReference>
<dbReference type="STRING" id="4577.B4FGS2"/>
<dbReference type="PaxDb" id="4577-GRMZM2G050126_P02"/>
<dbReference type="EnsemblPlants" id="Zm00001eb321530_T001">
    <property type="protein sequence ID" value="Zm00001eb321530_P001"/>
    <property type="gene ID" value="Zm00001eb321530"/>
</dbReference>
<dbReference type="GeneID" id="100193922"/>
<dbReference type="Gramene" id="Zm00001eb321530_T001">
    <property type="protein sequence ID" value="Zm00001eb321530_P001"/>
    <property type="gene ID" value="Zm00001eb321530"/>
</dbReference>
<dbReference type="KEGG" id="zma:100193922"/>
<dbReference type="eggNOG" id="KOG4832">
    <property type="taxonomic scope" value="Eukaryota"/>
</dbReference>
<dbReference type="InParanoid" id="B4FGS2"/>
<dbReference type="OrthoDB" id="5962at2759"/>
<dbReference type="Proteomes" id="UP000007305">
    <property type="component" value="Chromosome 7"/>
</dbReference>
<dbReference type="ExpressionAtlas" id="B4FGS2">
    <property type="expression patterns" value="baseline and differential"/>
</dbReference>
<dbReference type="GO" id="GO:0072686">
    <property type="term" value="C:mitotic spindle"/>
    <property type="evidence" value="ECO:0000318"/>
    <property type="project" value="GO_Central"/>
</dbReference>
<dbReference type="GO" id="GO:0000940">
    <property type="term" value="C:outer kinetochore"/>
    <property type="evidence" value="ECO:0000318"/>
    <property type="project" value="GO_Central"/>
</dbReference>
<dbReference type="GO" id="GO:0005876">
    <property type="term" value="C:spindle microtubule"/>
    <property type="evidence" value="ECO:0000318"/>
    <property type="project" value="GO_Central"/>
</dbReference>
<dbReference type="GO" id="GO:0008017">
    <property type="term" value="F:microtubule binding"/>
    <property type="evidence" value="ECO:0000250"/>
    <property type="project" value="UniProtKB"/>
</dbReference>
<dbReference type="GO" id="GO:0051315">
    <property type="term" value="P:attachment of mitotic spindle microtubules to kinetochore"/>
    <property type="evidence" value="ECO:0000250"/>
    <property type="project" value="UniProtKB"/>
</dbReference>
<dbReference type="GO" id="GO:0051301">
    <property type="term" value="P:cell division"/>
    <property type="evidence" value="ECO:0007669"/>
    <property type="project" value="InterPro"/>
</dbReference>
<dbReference type="GO" id="GO:0007059">
    <property type="term" value="P:chromosome segregation"/>
    <property type="evidence" value="ECO:0000318"/>
    <property type="project" value="GO_Central"/>
</dbReference>
<dbReference type="GO" id="GO:0000278">
    <property type="term" value="P:mitotic cell cycle"/>
    <property type="evidence" value="ECO:0000318"/>
    <property type="project" value="GO_Central"/>
</dbReference>
<dbReference type="GO" id="GO:0031110">
    <property type="term" value="P:regulation of microtubule polymerization or depolymerization"/>
    <property type="evidence" value="ECO:0000318"/>
    <property type="project" value="GO_Central"/>
</dbReference>
<dbReference type="FunFam" id="1.10.10.1890:FF:000002">
    <property type="entry name" value="Spindle and kinetochore-associated protein 1"/>
    <property type="match status" value="1"/>
</dbReference>
<dbReference type="Gene3D" id="1.10.10.1890">
    <property type="entry name" value="Ska1 microtubule binding domain-like"/>
    <property type="match status" value="1"/>
</dbReference>
<dbReference type="InterPro" id="IPR009829">
    <property type="entry name" value="SKA1"/>
</dbReference>
<dbReference type="InterPro" id="IPR042031">
    <property type="entry name" value="SKA1_MBD_sf"/>
</dbReference>
<dbReference type="PANTHER" id="PTHR28573">
    <property type="entry name" value="SPINDLE AND KINETOCHORE-ASSOCIATED PROTEIN 1"/>
    <property type="match status" value="1"/>
</dbReference>
<dbReference type="PANTHER" id="PTHR28573:SF1">
    <property type="entry name" value="SPINDLE AND KINETOCHORE-ASSOCIATED PROTEIN 1"/>
    <property type="match status" value="1"/>
</dbReference>
<dbReference type="Pfam" id="PF07160">
    <property type="entry name" value="SKA1"/>
    <property type="match status" value="1"/>
</dbReference>
<organism>
    <name type="scientific">Zea mays</name>
    <name type="common">Maize</name>
    <dbReference type="NCBI Taxonomy" id="4577"/>
    <lineage>
        <taxon>Eukaryota</taxon>
        <taxon>Viridiplantae</taxon>
        <taxon>Streptophyta</taxon>
        <taxon>Embryophyta</taxon>
        <taxon>Tracheophyta</taxon>
        <taxon>Spermatophyta</taxon>
        <taxon>Magnoliopsida</taxon>
        <taxon>Liliopsida</taxon>
        <taxon>Poales</taxon>
        <taxon>Poaceae</taxon>
        <taxon>PACMAD clade</taxon>
        <taxon>Panicoideae</taxon>
        <taxon>Andropogonodae</taxon>
        <taxon>Andropogoneae</taxon>
        <taxon>Tripsacinae</taxon>
        <taxon>Zea</taxon>
    </lineage>
</organism>
<accession>B4FGS2</accession>
<feature type="chain" id="PRO_0000373894" description="SKA complex subunit 1 homolog">
    <location>
        <begin position="1"/>
        <end position="273"/>
    </location>
</feature>
<feature type="coiled-coil region" evidence="1">
    <location>
        <begin position="77"/>
        <end position="97"/>
    </location>
</feature>
<protein>
    <recommendedName>
        <fullName evidence="2">SKA complex subunit 1 homolog</fullName>
    </recommendedName>
    <alternativeName>
        <fullName evidence="2">Spindle and kinetochore-associated protein 1 homolog</fullName>
    </alternativeName>
</protein>
<keyword id="KW-0175">Coiled coil</keyword>
<keyword id="KW-1185">Reference proteome</keyword>